<dbReference type="EMBL" id="AK001431">
    <property type="protein sequence ID" value="BAA91687.1"/>
    <property type="status" value="ALT_FRAME"/>
    <property type="molecule type" value="mRNA"/>
</dbReference>
<dbReference type="EMBL" id="BC001915">
    <property type="protein sequence ID" value="AAH01915.2"/>
    <property type="molecule type" value="mRNA"/>
</dbReference>
<dbReference type="EMBL" id="BC006209">
    <property type="protein sequence ID" value="AAH06209.2"/>
    <property type="molecule type" value="mRNA"/>
</dbReference>
<dbReference type="EMBL" id="BC051282">
    <property type="protein sequence ID" value="AAH51282.2"/>
    <property type="molecule type" value="mRNA"/>
</dbReference>
<dbReference type="EMBL" id="CR457262">
    <property type="protein sequence ID" value="CAG33543.1"/>
    <property type="molecule type" value="mRNA"/>
</dbReference>
<dbReference type="EMBL" id="AL442078">
    <property type="protein sequence ID" value="CAC09444.1"/>
    <property type="molecule type" value="mRNA"/>
</dbReference>
<dbReference type="EMBL" id="BK005727">
    <property type="protein sequence ID" value="DAA05727.1"/>
    <property type="status" value="ALT_FRAME"/>
    <property type="molecule type" value="mRNA"/>
</dbReference>
<dbReference type="CCDS" id="CCDS6011.2"/>
<dbReference type="RefSeq" id="NP_060612.2">
    <property type="nucleotide sequence ID" value="NM_018142.4"/>
</dbReference>
<dbReference type="PDB" id="8RBX">
    <property type="method" value="EM"/>
    <property type="resolution" value="4.10 A"/>
    <property type="chains" value="j=1-710"/>
</dbReference>
<dbReference type="PDB" id="8RBZ">
    <property type="method" value="EM"/>
    <property type="resolution" value="3.70 A"/>
    <property type="chains" value="j=1-710"/>
</dbReference>
<dbReference type="PDB" id="8RC4">
    <property type="method" value="EM"/>
    <property type="resolution" value="3.10 A"/>
    <property type="chains" value="j=1-710"/>
</dbReference>
<dbReference type="PDB" id="9EOC">
    <property type="method" value="EM"/>
    <property type="resolution" value="3.30 A"/>
    <property type="chains" value="D=1-710"/>
</dbReference>
<dbReference type="PDB" id="9EOF">
    <property type="method" value="EM"/>
    <property type="resolution" value="7.70 A"/>
    <property type="chains" value="D=1-710"/>
</dbReference>
<dbReference type="PDB" id="9EP1">
    <property type="method" value="EM"/>
    <property type="resolution" value="4.00 A"/>
    <property type="chains" value="D=1-710"/>
</dbReference>
<dbReference type="PDB" id="9FA4">
    <property type="method" value="EM"/>
    <property type="resolution" value="4.00 A"/>
    <property type="chains" value="D=1-710"/>
</dbReference>
<dbReference type="PDB" id="9FA7">
    <property type="method" value="EM"/>
    <property type="resolution" value="4.00 A"/>
    <property type="chains" value="D=1-710"/>
</dbReference>
<dbReference type="PDBsum" id="8RBX"/>
<dbReference type="PDBsum" id="8RBZ"/>
<dbReference type="PDBsum" id="8RC4"/>
<dbReference type="PDBsum" id="9EOC"/>
<dbReference type="PDBsum" id="9EOF"/>
<dbReference type="PDBsum" id="9EP1"/>
<dbReference type="PDBsum" id="9FA4"/>
<dbReference type="PDBsum" id="9FA7"/>
<dbReference type="EMDB" id="EMD-19038"/>
<dbReference type="EMDB" id="EMD-19040"/>
<dbReference type="EMDB" id="EMD-19047"/>
<dbReference type="EMDB" id="EMD-19851"/>
<dbReference type="EMDB" id="EMD-19853"/>
<dbReference type="EMDB" id="EMD-19871"/>
<dbReference type="EMDB" id="EMD-50267"/>
<dbReference type="EMDB" id="EMD-50268"/>
<dbReference type="SMR" id="Q9NVR2"/>
<dbReference type="BioGRID" id="120473">
    <property type="interactions" value="53"/>
</dbReference>
<dbReference type="ComplexPortal" id="CPX-6441">
    <property type="entry name" value="Integrator complex"/>
</dbReference>
<dbReference type="CORUM" id="Q9NVR2"/>
<dbReference type="DIP" id="DIP-34063N"/>
<dbReference type="FunCoup" id="Q9NVR2">
    <property type="interactions" value="3598"/>
</dbReference>
<dbReference type="IntAct" id="Q9NVR2">
    <property type="interactions" value="30"/>
</dbReference>
<dbReference type="MINT" id="Q9NVR2"/>
<dbReference type="STRING" id="9606.ENSP00000381064"/>
<dbReference type="GlyGen" id="Q9NVR2">
    <property type="glycosylation" value="4 sites, 1 O-linked glycan (3 sites)"/>
</dbReference>
<dbReference type="iPTMnet" id="Q9NVR2"/>
<dbReference type="PhosphoSitePlus" id="Q9NVR2"/>
<dbReference type="BioMuta" id="INTS10"/>
<dbReference type="DMDM" id="97052274"/>
<dbReference type="jPOST" id="Q9NVR2"/>
<dbReference type="MassIVE" id="Q9NVR2"/>
<dbReference type="PaxDb" id="9606-ENSP00000381064"/>
<dbReference type="PeptideAtlas" id="Q9NVR2"/>
<dbReference type="ProteomicsDB" id="82848"/>
<dbReference type="Pumba" id="Q9NVR2"/>
<dbReference type="Antibodypedia" id="41921">
    <property type="antibodies" value="210 antibodies from 27 providers"/>
</dbReference>
<dbReference type="DNASU" id="55174"/>
<dbReference type="Ensembl" id="ENST00000397977.8">
    <property type="protein sequence ID" value="ENSP00000381064.3"/>
    <property type="gene ID" value="ENSG00000104613.12"/>
</dbReference>
<dbReference type="GeneID" id="55174"/>
<dbReference type="KEGG" id="hsa:55174"/>
<dbReference type="MANE-Select" id="ENST00000397977.8">
    <property type="protein sequence ID" value="ENSP00000381064.3"/>
    <property type="RefSeq nucleotide sequence ID" value="NM_018142.4"/>
    <property type="RefSeq protein sequence ID" value="NP_060612.2"/>
</dbReference>
<dbReference type="UCSC" id="uc003wzj.4">
    <property type="organism name" value="human"/>
</dbReference>
<dbReference type="AGR" id="HGNC:25548"/>
<dbReference type="CTD" id="55174"/>
<dbReference type="DisGeNET" id="55174"/>
<dbReference type="GeneCards" id="INTS10"/>
<dbReference type="HGNC" id="HGNC:25548">
    <property type="gene designation" value="INTS10"/>
</dbReference>
<dbReference type="HPA" id="ENSG00000104613">
    <property type="expression patterns" value="Low tissue specificity"/>
</dbReference>
<dbReference type="MIM" id="611353">
    <property type="type" value="gene"/>
</dbReference>
<dbReference type="neXtProt" id="NX_Q9NVR2"/>
<dbReference type="OpenTargets" id="ENSG00000104613"/>
<dbReference type="PharmGKB" id="PA142672354"/>
<dbReference type="VEuPathDB" id="HostDB:ENSG00000104613"/>
<dbReference type="eggNOG" id="ENOG502QQ28">
    <property type="taxonomic scope" value="Eukaryota"/>
</dbReference>
<dbReference type="GeneTree" id="ENSGT00390000010950"/>
<dbReference type="HOGENOM" id="CLU_023740_0_0_1"/>
<dbReference type="InParanoid" id="Q9NVR2"/>
<dbReference type="OMA" id="FYVKMFQ"/>
<dbReference type="OrthoDB" id="18145at2759"/>
<dbReference type="PAN-GO" id="Q9NVR2">
    <property type="GO annotations" value="2 GO annotations based on evolutionary models"/>
</dbReference>
<dbReference type="PhylomeDB" id="Q9NVR2"/>
<dbReference type="TreeFam" id="TF323935"/>
<dbReference type="PathwayCommons" id="Q9NVR2"/>
<dbReference type="Reactome" id="R-HSA-6807505">
    <property type="pathway name" value="RNA polymerase II transcribes snRNA genes"/>
</dbReference>
<dbReference type="SignaLink" id="Q9NVR2"/>
<dbReference type="SIGNOR" id="Q9NVR2"/>
<dbReference type="BioGRID-ORCS" id="55174">
    <property type="hits" value="403 hits in 1168 CRISPR screens"/>
</dbReference>
<dbReference type="ChiTaRS" id="INTS10">
    <property type="organism name" value="human"/>
</dbReference>
<dbReference type="GenomeRNAi" id="55174"/>
<dbReference type="Pharos" id="Q9NVR2">
    <property type="development level" value="Tbio"/>
</dbReference>
<dbReference type="PRO" id="PR:Q9NVR2"/>
<dbReference type="Proteomes" id="UP000005640">
    <property type="component" value="Chromosome 8"/>
</dbReference>
<dbReference type="RNAct" id="Q9NVR2">
    <property type="molecule type" value="protein"/>
</dbReference>
<dbReference type="Bgee" id="ENSG00000104613">
    <property type="expression patterns" value="Expressed in body of pancreas and 184 other cell types or tissues"/>
</dbReference>
<dbReference type="ExpressionAtlas" id="Q9NVR2">
    <property type="expression patterns" value="baseline and differential"/>
</dbReference>
<dbReference type="GO" id="GO:0160232">
    <property type="term" value="C:INTAC complex"/>
    <property type="evidence" value="ECO:0000314"/>
    <property type="project" value="UniProtKB"/>
</dbReference>
<dbReference type="GO" id="GO:0032039">
    <property type="term" value="C:integrator complex"/>
    <property type="evidence" value="ECO:0000314"/>
    <property type="project" value="UniProtKB"/>
</dbReference>
<dbReference type="GO" id="GO:0005654">
    <property type="term" value="C:nucleoplasm"/>
    <property type="evidence" value="ECO:0000304"/>
    <property type="project" value="Reactome"/>
</dbReference>
<dbReference type="GO" id="GO:0005634">
    <property type="term" value="C:nucleus"/>
    <property type="evidence" value="ECO:0000314"/>
    <property type="project" value="UniProtKB"/>
</dbReference>
<dbReference type="GO" id="GO:0034243">
    <property type="term" value="P:regulation of transcription elongation by RNA polymerase II"/>
    <property type="evidence" value="ECO:0000303"/>
    <property type="project" value="ComplexPortal"/>
</dbReference>
<dbReference type="GO" id="GO:0160240">
    <property type="term" value="P:RNA polymerase II transcription initiation surveillance"/>
    <property type="evidence" value="ECO:0000314"/>
    <property type="project" value="UniProtKB"/>
</dbReference>
<dbReference type="GO" id="GO:0016180">
    <property type="term" value="P:snRNA processing"/>
    <property type="evidence" value="ECO:0000314"/>
    <property type="project" value="HGNC"/>
</dbReference>
<dbReference type="InterPro" id="IPR026164">
    <property type="entry name" value="Int_cplx_su10"/>
</dbReference>
<dbReference type="PANTHER" id="PTHR16055">
    <property type="entry name" value="INTEGRATOR COMPLEX SUBUNIT 10"/>
    <property type="match status" value="1"/>
</dbReference>
<dbReference type="PANTHER" id="PTHR16055:SF2">
    <property type="entry name" value="INTEGRATOR COMPLEX SUBUNIT 10"/>
    <property type="match status" value="1"/>
</dbReference>
<dbReference type="Pfam" id="PF21045">
    <property type="entry name" value="INT10"/>
    <property type="match status" value="1"/>
</dbReference>
<dbReference type="PRINTS" id="PR02106">
    <property type="entry name" value="INTSUBUNIT10"/>
</dbReference>
<gene>
    <name evidence="9 11" type="primary">INTS10</name>
    <name evidence="11" type="synonym">C8orf35</name>
</gene>
<proteinExistence type="evidence at protein level"/>
<accession>Q9NVR2</accession>
<accession>Q6IA93</accession>
<accession>Q7L538</accession>
<accession>Q7L8C8</accession>
<accession>Q9H3W8</accession>
<comment type="function">
    <text evidence="2 3 4 6 7">Component of the integrator complex, a multiprotein complex that terminates RNA polymerase II (Pol II) transcription in the promoter-proximal region of genes (PubMed:38570683, PubMed:38823386). The integrator complex provides a quality checkpoint during transcription elongation by driving premature transcription termination of transcripts that are unfavorably configured for transcriptional elongation: the complex terminates transcription by (1) catalyzing dephosphorylation of the C-terminal domain (CTD) of Pol II subunit POLR2A/RPB1 and SUPT5H/SPT5, (2) degrading the exiting nascent RNA transcript via endonuclease activity and (3) promoting the release of Pol II from bound DNA (PubMed:38570683). The integrator complex is also involved in terminating the synthesis of non-coding Pol II transcripts, such as enhancer RNAs (eRNAs), small nuclear RNAs (snRNAs), telomerase RNAs and long non-coding RNAs (lncRNAs) (PubMed:16239144, PubMed:32647223). Within the integrator complex, INTS10 is part of the integrator tail module that acts as a platform for the recruitment of transcription factors at promoters (PubMed:38823386). May be not involved in the recruitment of cytoplasmic dynein to the nuclear envelope, probably as component of the integrator complex (PubMed:23904267).</text>
</comment>
<comment type="subunit">
    <text evidence="2 4 5 6 7 8">Component of the Integrator complex, composed of core subunits INTS1, INTS2, INTS3, INTS4, INTS5, INTS6, INTS7, INTS8, INTS9/RC74, INTS10, INTS11/CPSF3L, INTS12, INTS13, INTS14 and INTS15 (PubMed:16239144, PubMed:32647223, PubMed:36920904, PubMed:38570683, PubMed:38823386, PubMed:39032490). The core complex associates with protein phosphatase 2A subunits PPP2CA and PPP2R1A, to form the Integrator-PP2A (INTAC) complex (PubMed:38570683). INTS10 is part of the tail subcomplex, composed of INTS10, INTS13, INTS14 and INTS15 (PubMed:32647223, PubMed:38823386).</text>
</comment>
<comment type="interaction">
    <interactant intactId="EBI-536703">
        <id>Q9NVR2</id>
    </interactant>
    <interactant intactId="EBI-4409724">
        <id>Q96SY0</id>
        <label>INTS14</label>
    </interactant>
    <organismsDiffer>false</organismsDiffer>
    <experiments>13</experiments>
</comment>
<comment type="interaction">
    <interactant intactId="EBI-536703">
        <id>Q9NVR2</id>
    </interactant>
    <interactant intactId="EBI-16439278">
        <id>Q6FHY5</id>
        <label>MEOX2</label>
    </interactant>
    <organismsDiffer>false</organismsDiffer>
    <experiments>3</experiments>
</comment>
<comment type="interaction">
    <interactant intactId="EBI-536703">
        <id>Q9NVR2</id>
    </interactant>
    <interactant intactId="EBI-10172876">
        <id>Q7Z6G3-2</id>
        <label>NECAB2</label>
    </interactant>
    <organismsDiffer>false</organismsDiffer>
    <experiments>3</experiments>
</comment>
<comment type="interaction">
    <interactant intactId="EBI-536703">
        <id>Q9NVR2</id>
    </interactant>
    <interactant intactId="EBI-625509">
        <id>Q8N720</id>
        <label>ZNF655</label>
    </interactant>
    <organismsDiffer>false</organismsDiffer>
    <experiments>3</experiments>
</comment>
<comment type="subcellular location">
    <subcellularLocation>
        <location evidence="2 3 8">Nucleus</location>
    </subcellularLocation>
</comment>
<comment type="similarity">
    <text evidence="10">Belongs to the Integrator subunit 10 family.</text>
</comment>
<comment type="sequence caution" evidence="10">
    <conflict type="frameshift">
        <sequence resource="EMBL-CDS" id="BAA91687"/>
    </conflict>
</comment>
<protein>
    <recommendedName>
        <fullName evidence="10">Integrator complex subunit 10</fullName>
        <shortName>Int10</shortName>
    </recommendedName>
</protein>
<reference key="1">
    <citation type="journal article" date="2004" name="Nat. Genet.">
        <title>Complete sequencing and characterization of 21,243 full-length human cDNAs.</title>
        <authorList>
            <person name="Ota T."/>
            <person name="Suzuki Y."/>
            <person name="Nishikawa T."/>
            <person name="Otsuki T."/>
            <person name="Sugiyama T."/>
            <person name="Irie R."/>
            <person name="Wakamatsu A."/>
            <person name="Hayashi K."/>
            <person name="Sato H."/>
            <person name="Nagai K."/>
            <person name="Kimura K."/>
            <person name="Makita H."/>
            <person name="Sekine M."/>
            <person name="Obayashi M."/>
            <person name="Nishi T."/>
            <person name="Shibahara T."/>
            <person name="Tanaka T."/>
            <person name="Ishii S."/>
            <person name="Yamamoto J."/>
            <person name="Saito K."/>
            <person name="Kawai Y."/>
            <person name="Isono Y."/>
            <person name="Nakamura Y."/>
            <person name="Nagahari K."/>
            <person name="Murakami K."/>
            <person name="Yasuda T."/>
            <person name="Iwayanagi T."/>
            <person name="Wagatsuma M."/>
            <person name="Shiratori A."/>
            <person name="Sudo H."/>
            <person name="Hosoiri T."/>
            <person name="Kaku Y."/>
            <person name="Kodaira H."/>
            <person name="Kondo H."/>
            <person name="Sugawara M."/>
            <person name="Takahashi M."/>
            <person name="Kanda K."/>
            <person name="Yokoi T."/>
            <person name="Furuya T."/>
            <person name="Kikkawa E."/>
            <person name="Omura Y."/>
            <person name="Abe K."/>
            <person name="Kamihara K."/>
            <person name="Katsuta N."/>
            <person name="Sato K."/>
            <person name="Tanikawa M."/>
            <person name="Yamazaki M."/>
            <person name="Ninomiya K."/>
            <person name="Ishibashi T."/>
            <person name="Yamashita H."/>
            <person name="Murakawa K."/>
            <person name="Fujimori K."/>
            <person name="Tanai H."/>
            <person name="Kimata M."/>
            <person name="Watanabe M."/>
            <person name="Hiraoka S."/>
            <person name="Chiba Y."/>
            <person name="Ishida S."/>
            <person name="Ono Y."/>
            <person name="Takiguchi S."/>
            <person name="Watanabe S."/>
            <person name="Yosida M."/>
            <person name="Hotuta T."/>
            <person name="Kusano J."/>
            <person name="Kanehori K."/>
            <person name="Takahashi-Fujii A."/>
            <person name="Hara H."/>
            <person name="Tanase T.-O."/>
            <person name="Nomura Y."/>
            <person name="Togiya S."/>
            <person name="Komai F."/>
            <person name="Hara R."/>
            <person name="Takeuchi K."/>
            <person name="Arita M."/>
            <person name="Imose N."/>
            <person name="Musashino K."/>
            <person name="Yuuki H."/>
            <person name="Oshima A."/>
            <person name="Sasaki N."/>
            <person name="Aotsuka S."/>
            <person name="Yoshikawa Y."/>
            <person name="Matsunawa H."/>
            <person name="Ichihara T."/>
            <person name="Shiohata N."/>
            <person name="Sano S."/>
            <person name="Moriya S."/>
            <person name="Momiyama H."/>
            <person name="Satoh N."/>
            <person name="Takami S."/>
            <person name="Terashima Y."/>
            <person name="Suzuki O."/>
            <person name="Nakagawa S."/>
            <person name="Senoh A."/>
            <person name="Mizoguchi H."/>
            <person name="Goto Y."/>
            <person name="Shimizu F."/>
            <person name="Wakebe H."/>
            <person name="Hishigaki H."/>
            <person name="Watanabe T."/>
            <person name="Sugiyama A."/>
            <person name="Takemoto M."/>
            <person name="Kawakami B."/>
            <person name="Yamazaki M."/>
            <person name="Watanabe K."/>
            <person name="Kumagai A."/>
            <person name="Itakura S."/>
            <person name="Fukuzumi Y."/>
            <person name="Fujimori Y."/>
            <person name="Komiyama M."/>
            <person name="Tashiro H."/>
            <person name="Tanigami A."/>
            <person name="Fujiwara T."/>
            <person name="Ono T."/>
            <person name="Yamada K."/>
            <person name="Fujii Y."/>
            <person name="Ozaki K."/>
            <person name="Hirao M."/>
            <person name="Ohmori Y."/>
            <person name="Kawabata A."/>
            <person name="Hikiji T."/>
            <person name="Kobatake N."/>
            <person name="Inagaki H."/>
            <person name="Ikema Y."/>
            <person name="Okamoto S."/>
            <person name="Okitani R."/>
            <person name="Kawakami T."/>
            <person name="Noguchi S."/>
            <person name="Itoh T."/>
            <person name="Shigeta K."/>
            <person name="Senba T."/>
            <person name="Matsumura K."/>
            <person name="Nakajima Y."/>
            <person name="Mizuno T."/>
            <person name="Morinaga M."/>
            <person name="Sasaki M."/>
            <person name="Togashi T."/>
            <person name="Oyama M."/>
            <person name="Hata H."/>
            <person name="Watanabe M."/>
            <person name="Komatsu T."/>
            <person name="Mizushima-Sugano J."/>
            <person name="Satoh T."/>
            <person name="Shirai Y."/>
            <person name="Takahashi Y."/>
            <person name="Nakagawa K."/>
            <person name="Okumura K."/>
            <person name="Nagase T."/>
            <person name="Nomura N."/>
            <person name="Kikuchi H."/>
            <person name="Masuho Y."/>
            <person name="Yamashita R."/>
            <person name="Nakai K."/>
            <person name="Yada T."/>
            <person name="Nakamura Y."/>
            <person name="Ohara O."/>
            <person name="Isogai T."/>
            <person name="Sugano S."/>
        </authorList>
    </citation>
    <scope>NUCLEOTIDE SEQUENCE [LARGE SCALE MRNA]</scope>
    <source>
        <tissue>Teratocarcinoma</tissue>
    </source>
</reference>
<reference key="2">
    <citation type="journal article" date="2004" name="Genome Res.">
        <title>The status, quality, and expansion of the NIH full-length cDNA project: the Mammalian Gene Collection (MGC).</title>
        <authorList>
            <consortium name="The MGC Project Team"/>
        </authorList>
    </citation>
    <scope>NUCLEOTIDE SEQUENCE [LARGE SCALE MRNA] OF 74-710</scope>
    <source>
        <tissue>Lung</tissue>
        <tissue>Neuroblastoma</tissue>
    </source>
</reference>
<reference key="3">
    <citation type="submission" date="2004-06" db="EMBL/GenBank/DDBJ databases">
        <title>Cloning of human full open reading frames in Gateway(TM) system entry vector (pDONR201).</title>
        <authorList>
            <person name="Ebert L."/>
            <person name="Schick M."/>
            <person name="Neubert P."/>
            <person name="Schatten R."/>
            <person name="Henze S."/>
            <person name="Korn B."/>
        </authorList>
    </citation>
    <scope>NUCLEOTIDE SEQUENCE [LARGE SCALE MRNA] OF 114-710</scope>
</reference>
<reference key="4">
    <citation type="journal article" date="2007" name="BMC Genomics">
        <title>The full-ORF clone resource of the German cDNA consortium.</title>
        <authorList>
            <person name="Bechtel S."/>
            <person name="Rosenfelder H."/>
            <person name="Duda A."/>
            <person name="Schmidt C.P."/>
            <person name="Ernst U."/>
            <person name="Wellenreuther R."/>
            <person name="Mehrle A."/>
            <person name="Schuster C."/>
            <person name="Bahr A."/>
            <person name="Bloecker H."/>
            <person name="Heubner D."/>
            <person name="Hoerlein A."/>
            <person name="Michel G."/>
            <person name="Wedler H."/>
            <person name="Koehrer K."/>
            <person name="Ottenwaelder B."/>
            <person name="Poustka A."/>
            <person name="Wiemann S."/>
            <person name="Schupp I."/>
        </authorList>
    </citation>
    <scope>NUCLEOTIDE SEQUENCE [LARGE SCALE MRNA] OF 377-710</scope>
    <source>
        <tissue>Lymph node</tissue>
    </source>
</reference>
<reference key="5">
    <citation type="journal article" date="2005" name="Cell">
        <title>Integrator, a multiprotein mediator of small nuclear RNA processing, associates with the C-terminal repeat of RNA polymerase II.</title>
        <authorList>
            <person name="Baillat D."/>
            <person name="Hakimi M.-A."/>
            <person name="Naeaer A.M."/>
            <person name="Shilatifard A."/>
            <person name="Cooch N."/>
            <person name="Shiekhattar R."/>
        </authorList>
    </citation>
    <scope>FUNCTION</scope>
    <scope>IDENTIFICATION BY MASS SPECTROMETRY</scope>
    <scope>IDENTIFICATION IN THE INTEGRATOR COMPLEX</scope>
    <scope>SUBCELLULAR LOCATION</scope>
</reference>
<reference key="6">
    <citation type="journal article" date="2008" name="Mol. Cell">
        <title>Kinase-selective enrichment enables quantitative phosphoproteomics of the kinome across the cell cycle.</title>
        <authorList>
            <person name="Daub H."/>
            <person name="Olsen J.V."/>
            <person name="Bairlein M."/>
            <person name="Gnad F."/>
            <person name="Oppermann F.S."/>
            <person name="Korner R."/>
            <person name="Greff Z."/>
            <person name="Keri G."/>
            <person name="Stemmann O."/>
            <person name="Mann M."/>
        </authorList>
    </citation>
    <scope>IDENTIFICATION BY MASS SPECTROMETRY [LARGE SCALE ANALYSIS]</scope>
    <source>
        <tissue>Cervix carcinoma</tissue>
    </source>
</reference>
<reference key="7">
    <citation type="journal article" date="2009" name="Sci. Signal.">
        <title>Quantitative phosphoproteomic analysis of T cell receptor signaling reveals system-wide modulation of protein-protein interactions.</title>
        <authorList>
            <person name="Mayya V."/>
            <person name="Lundgren D.H."/>
            <person name="Hwang S.-I."/>
            <person name="Rezaul K."/>
            <person name="Wu L."/>
            <person name="Eng J.K."/>
            <person name="Rodionov V."/>
            <person name="Han D.K."/>
        </authorList>
    </citation>
    <scope>PHOSPHORYLATION [LARGE SCALE ANALYSIS] AT SER-231</scope>
    <scope>IDENTIFICATION BY MASS SPECTROMETRY [LARGE SCALE ANALYSIS]</scope>
    <source>
        <tissue>Leukemic T-cell</tissue>
    </source>
</reference>
<reference key="8">
    <citation type="journal article" date="2011" name="Sci. Signal.">
        <title>System-wide temporal characterization of the proteome and phosphoproteome of human embryonic stem cell differentiation.</title>
        <authorList>
            <person name="Rigbolt K.T."/>
            <person name="Prokhorova T.A."/>
            <person name="Akimov V."/>
            <person name="Henningsen J."/>
            <person name="Johansen P.T."/>
            <person name="Kratchmarova I."/>
            <person name="Kassem M."/>
            <person name="Mann M."/>
            <person name="Olsen J.V."/>
            <person name="Blagoev B."/>
        </authorList>
    </citation>
    <scope>IDENTIFICATION BY MASS SPECTROMETRY [LARGE SCALE ANALYSIS]</scope>
</reference>
<reference key="9">
    <citation type="journal article" date="2013" name="J. Proteome Res.">
        <title>Toward a comprehensive characterization of a human cancer cell phosphoproteome.</title>
        <authorList>
            <person name="Zhou H."/>
            <person name="Di Palma S."/>
            <person name="Preisinger C."/>
            <person name="Peng M."/>
            <person name="Polat A.N."/>
            <person name="Heck A.J."/>
            <person name="Mohammed S."/>
        </authorList>
    </citation>
    <scope>PHOSPHORYLATION [LARGE SCALE ANALYSIS] AT SER-231</scope>
    <scope>IDENTIFICATION BY MASS SPECTROMETRY [LARGE SCALE ANALYSIS]</scope>
    <source>
        <tissue>Cervix carcinoma</tissue>
        <tissue>Erythroleukemia</tissue>
    </source>
</reference>
<reference key="10">
    <citation type="journal article" date="2013" name="Mol. Biol. Cell">
        <title>Nuclear-localized Asunder regulates cytoplasmic dynein localization via its role in the integrator complex.</title>
        <authorList>
            <person name="Jodoin J.N."/>
            <person name="Sitaram P."/>
            <person name="Albrecht T.R."/>
            <person name="May S.B."/>
            <person name="Shboul M."/>
            <person name="Lee E."/>
            <person name="Reversade B."/>
            <person name="Wagner E.J."/>
            <person name="Lee L.A."/>
        </authorList>
    </citation>
    <scope>FUNCTION</scope>
    <scope>SUBCELLULAR LOCATION</scope>
</reference>
<reference key="11">
    <citation type="journal article" date="2014" name="Proc. Natl. Acad. Sci. U.S.A.">
        <title>Mapping of SUMO sites and analysis of SUMOylation changes induced by external stimuli.</title>
        <authorList>
            <person name="Impens F."/>
            <person name="Radoshevich L."/>
            <person name="Cossart P."/>
            <person name="Ribet D."/>
        </authorList>
    </citation>
    <scope>SUMOYLATION [LARGE SCALE ANALYSIS] AT LYS-464</scope>
    <scope>IDENTIFICATION BY MASS SPECTROMETRY [LARGE SCALE ANALYSIS]</scope>
</reference>
<reference key="12">
    <citation type="journal article" date="2017" name="Nat. Struct. Mol. Biol.">
        <title>Site-specific mapping of the human SUMO proteome reveals co-modification with phosphorylation.</title>
        <authorList>
            <person name="Hendriks I.A."/>
            <person name="Lyon D."/>
            <person name="Young C."/>
            <person name="Jensen L.J."/>
            <person name="Vertegaal A.C."/>
            <person name="Nielsen M.L."/>
        </authorList>
    </citation>
    <scope>SUMOYLATION [LARGE SCALE ANALYSIS] AT LYS-464</scope>
    <scope>IDENTIFICATION BY MASS SPECTROMETRY [LARGE SCALE ANALYSIS]</scope>
</reference>
<reference key="13">
    <citation type="journal article" date="2020" name="Nat. Commun.">
        <title>INTS10-INTS13-INTS14 form a functional module of Integrator that binds nucleic acids and the cleavage module.</title>
        <authorList>
            <person name="Sabath K."/>
            <person name="Staeubli M.L."/>
            <person name="Marti S."/>
            <person name="Leitner A."/>
            <person name="Moes M."/>
            <person name="Jonas S."/>
        </authorList>
    </citation>
    <scope>FUNCTION</scope>
    <scope>IDENTIFICATION IN THE INTEGRATOR COMPLEX</scope>
</reference>
<reference key="14">
    <citation type="journal article" date="2023" name="Cell Rep.">
        <title>A combinatorial approach to uncover an additional Integrator subunit.</title>
        <authorList>
            <person name="Offley S.R."/>
            <person name="Pfleiderer M.M."/>
            <person name="Zucco A."/>
            <person name="Fraudeau A."/>
            <person name="Welsh S.A."/>
            <person name="Razew M."/>
            <person name="Galej W.P."/>
            <person name="Gardini A."/>
        </authorList>
    </citation>
    <scope>IDENTIFICATION IN THE INTEGRATOR COMPLEX</scope>
    <scope>MUTAGENESIS OF 28-TRP-LEU-29 AND 633-GLU-GLU-634</scope>
</reference>
<reference key="15">
    <citation type="journal article" date="2024" name="Mol. Cell">
        <title>Cytoplasmic binding partners of the Integrator endonuclease INTS11 and its paralog CPSF73 are required for their nuclear function.</title>
        <authorList>
            <person name="Lin M.H."/>
            <person name="Jensen M.K."/>
            <person name="Elrod N.D."/>
            <person name="Chu H.F."/>
            <person name="Haseley M."/>
            <person name="Beam A.C."/>
            <person name="Huang K.L."/>
            <person name="Chiang W."/>
            <person name="Russell W.K."/>
            <person name="Williams K."/>
            <person name="Proschel C."/>
            <person name="Wagner E.J."/>
            <person name="Tong L."/>
        </authorList>
    </citation>
    <scope>IDENTIFICATION IN THE INTEGRATOR COMPLEX</scope>
    <scope>SUBCELLULAR LOCATION</scope>
</reference>
<reference evidence="15 16 17 18 19" key="16">
    <citation type="journal article" date="2024" name="Mol. Cell">
        <title>Structural basis of the Integrator complex assembly and association with transcription factors.</title>
        <authorList>
            <person name="Razew M."/>
            <person name="Fraudeau A."/>
            <person name="Pfleiderer M.M."/>
            <person name="Linares R."/>
            <person name="Galej W.P."/>
        </authorList>
    </citation>
    <scope>STRUCTURE BY ELECTRON MICROSCOPY (3.30 ANGSTROMS) IN COMPLEX WITH INTS5; INTS8; INTS13; INTS14 AND INTS15</scope>
    <scope>FUNCTION</scope>
    <scope>IDENTIFICATION IN THE INTEGRATOR COMPLEX</scope>
</reference>
<reference evidence="12 13 14" key="17">
    <citation type="journal article" date="2024" name="Nature">
        <title>Structural basis of Integrator-dependent RNA polymerase II termination.</title>
        <authorList>
            <person name="Fianu I."/>
            <person name="Ochmann M."/>
            <person name="Walshe J.L."/>
            <person name="Dybkov O."/>
            <person name="Cruz J.N."/>
            <person name="Urlaub H."/>
            <person name="Cramer P."/>
        </authorList>
    </citation>
    <scope>STRUCTURE BY ELECTRON MICROSCOPY (3.10 ANGSTROMS) OF INTAC COMPLEX</scope>
    <scope>FUNCTION</scope>
    <scope>IDENTIFICATION IN THE INTAC COMPLEX</scope>
</reference>
<feature type="chain" id="PRO_0000235687" description="Integrator complex subunit 10">
    <location>
        <begin position="1"/>
        <end position="710"/>
    </location>
</feature>
<feature type="modified residue" description="Phosphoserine" evidence="20 21">
    <location>
        <position position="231"/>
    </location>
</feature>
<feature type="modified residue" description="Phosphoserine" evidence="1">
    <location>
        <position position="381"/>
    </location>
</feature>
<feature type="modified residue" description="Phosphoserine" evidence="1">
    <location>
        <position position="382"/>
    </location>
</feature>
<feature type="cross-link" description="Glycyl lysine isopeptide (Lys-Gly) (interchain with G-Cter in SUMO2)" evidence="22 23">
    <location>
        <position position="464"/>
    </location>
</feature>
<feature type="mutagenesis site" description="Abolished interaction with INTS15." evidence="5">
    <original>WL</original>
    <variation>PP</variation>
    <location>
        <begin position="28"/>
        <end position="29"/>
    </location>
</feature>
<feature type="mutagenesis site" description="Abolished interaction with INTS13 and INTS14." evidence="5">
    <original>EE</original>
    <variation>AA</variation>
    <location>
        <begin position="633"/>
        <end position="634"/>
    </location>
</feature>
<feature type="sequence conflict" description="In Ref. 3; CAG33543." evidence="10" ref="3">
    <original>S</original>
    <variation>N</variation>
    <location>
        <position position="412"/>
    </location>
</feature>
<feature type="helix" evidence="24">
    <location>
        <begin position="4"/>
        <end position="16"/>
    </location>
</feature>
<feature type="turn" evidence="24">
    <location>
        <begin position="17"/>
        <end position="20"/>
    </location>
</feature>
<feature type="helix" evidence="24">
    <location>
        <begin position="22"/>
        <end position="29"/>
    </location>
</feature>
<feature type="strand" evidence="24">
    <location>
        <begin position="33"/>
        <end position="35"/>
    </location>
</feature>
<feature type="helix" evidence="24">
    <location>
        <begin position="36"/>
        <end position="39"/>
    </location>
</feature>
<feature type="turn" evidence="24">
    <location>
        <begin position="40"/>
        <end position="42"/>
    </location>
</feature>
<feature type="helix" evidence="24">
    <location>
        <begin position="43"/>
        <end position="48"/>
    </location>
</feature>
<feature type="helix" evidence="24">
    <location>
        <begin position="54"/>
        <end position="69"/>
    </location>
</feature>
<feature type="helix" evidence="24">
    <location>
        <begin position="75"/>
        <end position="86"/>
    </location>
</feature>
<feature type="strand" evidence="24">
    <location>
        <begin position="91"/>
        <end position="93"/>
    </location>
</feature>
<feature type="helix" evidence="24">
    <location>
        <begin position="94"/>
        <end position="104"/>
    </location>
</feature>
<feature type="helix" evidence="24">
    <location>
        <begin position="108"/>
        <end position="120"/>
    </location>
</feature>
<feature type="helix" evidence="24">
    <location>
        <begin position="125"/>
        <end position="138"/>
    </location>
</feature>
<feature type="strand" evidence="24">
    <location>
        <begin position="144"/>
        <end position="146"/>
    </location>
</feature>
<feature type="helix" evidence="24">
    <location>
        <begin position="148"/>
        <end position="161"/>
    </location>
</feature>
<feature type="strand" evidence="25">
    <location>
        <begin position="164"/>
        <end position="166"/>
    </location>
</feature>
<feature type="helix" evidence="24">
    <location>
        <begin position="169"/>
        <end position="184"/>
    </location>
</feature>
<feature type="strand" evidence="25">
    <location>
        <begin position="186"/>
        <end position="188"/>
    </location>
</feature>
<feature type="helix" evidence="24">
    <location>
        <begin position="192"/>
        <end position="211"/>
    </location>
</feature>
<feature type="helix" evidence="24">
    <location>
        <begin position="247"/>
        <end position="250"/>
    </location>
</feature>
<feature type="helix" evidence="24">
    <location>
        <begin position="255"/>
        <end position="269"/>
    </location>
</feature>
<feature type="strand" evidence="24">
    <location>
        <begin position="283"/>
        <end position="286"/>
    </location>
</feature>
<feature type="helix" evidence="24">
    <location>
        <begin position="288"/>
        <end position="291"/>
    </location>
</feature>
<feature type="turn" evidence="24">
    <location>
        <begin position="300"/>
        <end position="303"/>
    </location>
</feature>
<feature type="helix" evidence="24">
    <location>
        <begin position="304"/>
        <end position="329"/>
    </location>
</feature>
<feature type="turn" evidence="24">
    <location>
        <begin position="331"/>
        <end position="334"/>
    </location>
</feature>
<feature type="strand" evidence="25">
    <location>
        <begin position="345"/>
        <end position="350"/>
    </location>
</feature>
<feature type="helix" evidence="24">
    <location>
        <begin position="351"/>
        <end position="355"/>
    </location>
</feature>
<feature type="strand" evidence="24">
    <location>
        <begin position="362"/>
        <end position="368"/>
    </location>
</feature>
<feature type="helix" evidence="24">
    <location>
        <begin position="369"/>
        <end position="374"/>
    </location>
</feature>
<feature type="helix" evidence="24">
    <location>
        <begin position="390"/>
        <end position="393"/>
    </location>
</feature>
<feature type="turn" evidence="24">
    <location>
        <begin position="400"/>
        <end position="402"/>
    </location>
</feature>
<feature type="turn" evidence="24">
    <location>
        <begin position="406"/>
        <end position="408"/>
    </location>
</feature>
<feature type="helix" evidence="24">
    <location>
        <begin position="409"/>
        <end position="425"/>
    </location>
</feature>
<feature type="helix" evidence="24">
    <location>
        <begin position="427"/>
        <end position="439"/>
    </location>
</feature>
<feature type="turn" evidence="24">
    <location>
        <begin position="440"/>
        <end position="444"/>
    </location>
</feature>
<feature type="helix" evidence="24">
    <location>
        <begin position="446"/>
        <end position="459"/>
    </location>
</feature>
<feature type="helix" evidence="24">
    <location>
        <begin position="462"/>
        <end position="477"/>
    </location>
</feature>
<feature type="strand" evidence="24">
    <location>
        <begin position="480"/>
        <end position="483"/>
    </location>
</feature>
<feature type="strand" evidence="24">
    <location>
        <begin position="486"/>
        <end position="488"/>
    </location>
</feature>
<feature type="helix" evidence="24">
    <location>
        <begin position="490"/>
        <end position="506"/>
    </location>
</feature>
<feature type="helix" evidence="24">
    <location>
        <begin position="509"/>
        <end position="520"/>
    </location>
</feature>
<feature type="strand" evidence="24">
    <location>
        <begin position="555"/>
        <end position="557"/>
    </location>
</feature>
<feature type="helix" evidence="24">
    <location>
        <begin position="560"/>
        <end position="563"/>
    </location>
</feature>
<feature type="helix" evidence="24">
    <location>
        <begin position="565"/>
        <end position="577"/>
    </location>
</feature>
<feature type="helix" evidence="24">
    <location>
        <begin position="583"/>
        <end position="591"/>
    </location>
</feature>
<feature type="helix" evidence="24">
    <location>
        <begin position="592"/>
        <end position="594"/>
    </location>
</feature>
<feature type="helix" evidence="24">
    <location>
        <begin position="599"/>
        <end position="614"/>
    </location>
</feature>
<feature type="strand" evidence="24">
    <location>
        <begin position="620"/>
        <end position="625"/>
    </location>
</feature>
<feature type="helix" evidence="24">
    <location>
        <begin position="629"/>
        <end position="639"/>
    </location>
</feature>
<feature type="helix" evidence="24">
    <location>
        <begin position="641"/>
        <end position="643"/>
    </location>
</feature>
<feature type="strand" evidence="24">
    <location>
        <begin position="666"/>
        <end position="669"/>
    </location>
</feature>
<feature type="helix" evidence="24">
    <location>
        <begin position="670"/>
        <end position="684"/>
    </location>
</feature>
<feature type="turn" evidence="24">
    <location>
        <begin position="685"/>
        <end position="687"/>
    </location>
</feature>
<feature type="helix" evidence="24">
    <location>
        <begin position="690"/>
        <end position="700"/>
    </location>
</feature>
<feature type="helix" evidence="24">
    <location>
        <begin position="702"/>
        <end position="709"/>
    </location>
</feature>
<keyword id="KW-0002">3D-structure</keyword>
<keyword id="KW-1017">Isopeptide bond</keyword>
<keyword id="KW-0539">Nucleus</keyword>
<keyword id="KW-0597">Phosphoprotein</keyword>
<keyword id="KW-1267">Proteomics identification</keyword>
<keyword id="KW-1185">Reference proteome</keyword>
<keyword id="KW-0832">Ubl conjugation</keyword>
<sequence length="710" mass="82236">MSAQGDCEFLVQRARELVPQDLWAAKAWLITARSLYPADFNIQYEMYTIERNAERTATAGRLLYDMFVNFPDQPVVWREISIITSALRNDSQDKQTQFLRSLFETLPGRVQCEMLLKVTEQCFNTLERSEMLLLLLRRFPETVVQHGVGLGEALLEAETIEEQESPVNCFRKLFVCDVLPLIINNHDVRLPANLLYKYLNKAAEFYINYVTRSTQIENQHQGAQDTSDLMSPSKRSSQKYIIEGLTEKSSQIVDPWERLFKILNVVGMRCEWQMDKGRRSYGDILHRMKDLCRYMNNFDSEAHAKYKNQVVYSTMLVFFKNAFQYVNSIQPSLFQGPNAPSQVPLVLLEDVSNVYGDVEIDRNKHIHKKRKLAEGREKTMSSDDEDCSAKGRNRHIVVNKAELANSTEVLESFKLARESWELLYSLEFLDKEFTRICLAWKTDTWLWLRIFLTDMIIYQGQYKKAIASLHHLAALQGSISQPQITGQGTLEHQRALIQLATCHFALGEYRMTCEKVLDLMCYMVLPIQDGGKSQEEPSKVKPKFRKGSDLKLLPCTSKAIMPYCLHLMLACFKLRAFTDNRDDMALGHVIVLLQQEWPRGENLFLKAVNKICQQGNFQYENFFNYVTNIDMLEEFAYLRTQEGGKIHLELLPNQGMLIKHHTVTRGITKGVKEDFRLAMERQVSRCGENLMVVLHRFCINEKILLLQTLT</sequence>
<organism>
    <name type="scientific">Homo sapiens</name>
    <name type="common">Human</name>
    <dbReference type="NCBI Taxonomy" id="9606"/>
    <lineage>
        <taxon>Eukaryota</taxon>
        <taxon>Metazoa</taxon>
        <taxon>Chordata</taxon>
        <taxon>Craniata</taxon>
        <taxon>Vertebrata</taxon>
        <taxon>Euteleostomi</taxon>
        <taxon>Mammalia</taxon>
        <taxon>Eutheria</taxon>
        <taxon>Euarchontoglires</taxon>
        <taxon>Primates</taxon>
        <taxon>Haplorrhini</taxon>
        <taxon>Catarrhini</taxon>
        <taxon>Hominidae</taxon>
        <taxon>Homo</taxon>
    </lineage>
</organism>
<name>INT10_HUMAN</name>
<evidence type="ECO:0000250" key="1">
    <source>
        <dbReference type="UniProtKB" id="Q8K2A7"/>
    </source>
</evidence>
<evidence type="ECO:0000269" key="2">
    <source>
    </source>
</evidence>
<evidence type="ECO:0000269" key="3">
    <source>
    </source>
</evidence>
<evidence type="ECO:0000269" key="4">
    <source>
    </source>
</evidence>
<evidence type="ECO:0000269" key="5">
    <source>
    </source>
</evidence>
<evidence type="ECO:0000269" key="6">
    <source>
    </source>
</evidence>
<evidence type="ECO:0000269" key="7">
    <source>
    </source>
</evidence>
<evidence type="ECO:0000269" key="8">
    <source>
    </source>
</evidence>
<evidence type="ECO:0000303" key="9">
    <source>
    </source>
</evidence>
<evidence type="ECO:0000305" key="10"/>
<evidence type="ECO:0000312" key="11">
    <source>
        <dbReference type="HGNC" id="HGNC:25548"/>
    </source>
</evidence>
<evidence type="ECO:0007744" key="12">
    <source>
        <dbReference type="PDB" id="8RBX"/>
    </source>
</evidence>
<evidence type="ECO:0007744" key="13">
    <source>
        <dbReference type="PDB" id="8RBZ"/>
    </source>
</evidence>
<evidence type="ECO:0007744" key="14">
    <source>
        <dbReference type="PDB" id="8RC4"/>
    </source>
</evidence>
<evidence type="ECO:0007744" key="15">
    <source>
        <dbReference type="PDB" id="9EOC"/>
    </source>
</evidence>
<evidence type="ECO:0007744" key="16">
    <source>
        <dbReference type="PDB" id="9EOF"/>
    </source>
</evidence>
<evidence type="ECO:0007744" key="17">
    <source>
        <dbReference type="PDB" id="9EP1"/>
    </source>
</evidence>
<evidence type="ECO:0007744" key="18">
    <source>
        <dbReference type="PDB" id="9FA4"/>
    </source>
</evidence>
<evidence type="ECO:0007744" key="19">
    <source>
        <dbReference type="PDB" id="9FA7"/>
    </source>
</evidence>
<evidence type="ECO:0007744" key="20">
    <source>
    </source>
</evidence>
<evidence type="ECO:0007744" key="21">
    <source>
    </source>
</evidence>
<evidence type="ECO:0007744" key="22">
    <source>
    </source>
</evidence>
<evidence type="ECO:0007744" key="23">
    <source>
    </source>
</evidence>
<evidence type="ECO:0007829" key="24">
    <source>
        <dbReference type="PDB" id="8RC4"/>
    </source>
</evidence>
<evidence type="ECO:0007829" key="25">
    <source>
        <dbReference type="PDB" id="9EOC"/>
    </source>
</evidence>